<sequence length="324" mass="35178">MSLLRSLRFFPVACTGRSARAVLLQPSQPWHTLHAGPSLSSSASSKELLMKLRRTTGYSFVNCKKALETCGGDLKQAEAWLHKQAQKEGWSKAAKLHGRKTKEGLIGLLQEENTAVLVEVNCETDFVSRNVKFQQLVQQVALGTMAHCQNLTDQLSTYSKGFLNSSELSELAAGPDGEGSLKDQLALAIGTLGENMSLKRAAWVKVPSGFYVGSYVHGEMQSPSLQNLVLGKYGALVICQTPEQITNLEEVGRRLGQHVVGMAPLSVGSLDDEPGGETETRMLPQPYLLDPSITLGQYVQPQGVTVVDFVRFECGEGEQVAEAE</sequence>
<feature type="transit peptide" description="Mitochondrion" evidence="3">
    <location>
        <begin position="1"/>
        <end position="44"/>
    </location>
</feature>
<feature type="chain" id="PRO_0000007470" description="Elongation factor Ts, mitochondrial">
    <location>
        <begin position="45"/>
        <end position="324"/>
    </location>
</feature>
<feature type="modified residue" description="N6-succinyllysine" evidence="2">
    <location>
        <position position="75"/>
    </location>
</feature>
<feature type="modified residue" description="N6-succinyllysine" evidence="2">
    <location>
        <position position="132"/>
    </location>
</feature>
<feature type="modified residue" description="Phosphoserine" evidence="1">
    <location>
        <position position="269"/>
    </location>
</feature>
<keyword id="KW-0251">Elongation factor</keyword>
<keyword id="KW-0496">Mitochondrion</keyword>
<keyword id="KW-0597">Phosphoprotein</keyword>
<keyword id="KW-0648">Protein biosynthesis</keyword>
<keyword id="KW-1185">Reference proteome</keyword>
<keyword id="KW-0809">Transit peptide</keyword>
<gene>
    <name type="primary">Tsfm</name>
</gene>
<reference key="1">
    <citation type="journal article" date="1999" name="Arterioscler. Thromb. Vasc. Biol.">
        <title>Identification and cloning of a new gene (2A3-2), homologous to human translational elongation factor, upregulated in a proliferating rat smooth muscle cell line and in carotid hyperplasia.</title>
        <authorList>
            <person name="Zibara K."/>
            <person name="Bourdillon M.C."/>
            <person name="Chignier E."/>
            <person name="Covacho C."/>
            <person name="McGregor J.L."/>
        </authorList>
    </citation>
    <scope>NUCLEOTIDE SEQUENCE [MRNA]</scope>
</reference>
<accession>Q9QYU2</accession>
<name>EFTS_RAT</name>
<proteinExistence type="evidence at transcript level"/>
<organism>
    <name type="scientific">Rattus norvegicus</name>
    <name type="common">Rat</name>
    <dbReference type="NCBI Taxonomy" id="10116"/>
    <lineage>
        <taxon>Eukaryota</taxon>
        <taxon>Metazoa</taxon>
        <taxon>Chordata</taxon>
        <taxon>Craniata</taxon>
        <taxon>Vertebrata</taxon>
        <taxon>Euteleostomi</taxon>
        <taxon>Mammalia</taxon>
        <taxon>Eutheria</taxon>
        <taxon>Euarchontoglires</taxon>
        <taxon>Glires</taxon>
        <taxon>Rodentia</taxon>
        <taxon>Myomorpha</taxon>
        <taxon>Muroidea</taxon>
        <taxon>Muridae</taxon>
        <taxon>Murinae</taxon>
        <taxon>Rattus</taxon>
    </lineage>
</organism>
<protein>
    <recommendedName>
        <fullName evidence="3">Elongation factor Ts, mitochondrial</fullName>
        <shortName evidence="3">EF-Ts</shortName>
        <shortName evidence="3">EF-TsMt</shortName>
    </recommendedName>
    <alternativeName>
        <fullName>2A3-2</fullName>
    </alternativeName>
</protein>
<evidence type="ECO:0000250" key="1">
    <source>
        <dbReference type="UniProtKB" id="P43897"/>
    </source>
</evidence>
<evidence type="ECO:0000250" key="2">
    <source>
        <dbReference type="UniProtKB" id="Q9CZR8"/>
    </source>
</evidence>
<evidence type="ECO:0000255" key="3">
    <source>
        <dbReference type="HAMAP-Rule" id="MF_03135"/>
    </source>
</evidence>
<comment type="function">
    <text evidence="3">Associates with the EF-Tu.GDP complex and induces the exchange of GDP to GTP. It remains bound to the aminoacyl-tRNA.EF-Tu.GTP complex up to the GTP hydrolysis stage on the ribosome.</text>
</comment>
<comment type="subcellular location">
    <subcellularLocation>
        <location evidence="3">Mitochondrion</location>
    </subcellularLocation>
</comment>
<comment type="similarity">
    <text evidence="3">Belongs to the EF-Ts family.</text>
</comment>
<dbReference type="EMBL" id="AJ005161">
    <property type="protein sequence ID" value="CAB56708.1"/>
    <property type="molecule type" value="mRNA"/>
</dbReference>
<dbReference type="SMR" id="Q9QYU2"/>
<dbReference type="FunCoup" id="Q9QYU2">
    <property type="interactions" value="3147"/>
</dbReference>
<dbReference type="STRING" id="10116.ENSRNOP00000064332"/>
<dbReference type="PhosphoSitePlus" id="Q9QYU2"/>
<dbReference type="jPOST" id="Q9QYU2"/>
<dbReference type="PaxDb" id="10116-ENSRNOP00000064332"/>
<dbReference type="Ensembl" id="ENSRNOT00000071543.3">
    <property type="protein sequence ID" value="ENSRNOP00000064332.3"/>
    <property type="gene ID" value="ENSRNOG00000048843.3"/>
</dbReference>
<dbReference type="AGR" id="RGD:1593058"/>
<dbReference type="RGD" id="1593058">
    <property type="gene designation" value="Tsfm"/>
</dbReference>
<dbReference type="eggNOG" id="KOG1071">
    <property type="taxonomic scope" value="Eukaryota"/>
</dbReference>
<dbReference type="GeneTree" id="ENSGT00390000016293"/>
<dbReference type="InParanoid" id="Q9QYU2"/>
<dbReference type="OMA" id="QEYMLDD"/>
<dbReference type="OrthoDB" id="277235at2759"/>
<dbReference type="PhylomeDB" id="Q9QYU2"/>
<dbReference type="PRO" id="PR:Q9QYU2"/>
<dbReference type="Proteomes" id="UP000002494">
    <property type="component" value="Chromosome 7"/>
</dbReference>
<dbReference type="GO" id="GO:0005739">
    <property type="term" value="C:mitochondrion"/>
    <property type="evidence" value="ECO:0007669"/>
    <property type="project" value="UniProtKB-SubCell"/>
</dbReference>
<dbReference type="GO" id="GO:0003746">
    <property type="term" value="F:translation elongation factor activity"/>
    <property type="evidence" value="ECO:0000318"/>
    <property type="project" value="GO_Central"/>
</dbReference>
<dbReference type="GO" id="GO:0070125">
    <property type="term" value="P:mitochondrial translational elongation"/>
    <property type="evidence" value="ECO:0000318"/>
    <property type="project" value="GO_Central"/>
</dbReference>
<dbReference type="GO" id="GO:0070129">
    <property type="term" value="P:regulation of mitochondrial translation"/>
    <property type="evidence" value="ECO:0000250"/>
    <property type="project" value="UniProtKB"/>
</dbReference>
<dbReference type="CDD" id="cd14275">
    <property type="entry name" value="UBA_EF-Ts"/>
    <property type="match status" value="1"/>
</dbReference>
<dbReference type="FunFam" id="1.10.8.10:FF:000031">
    <property type="entry name" value="Elongation factor Ts, mitochondrial"/>
    <property type="match status" value="1"/>
</dbReference>
<dbReference type="FunFam" id="3.30.479.20:FF:000007">
    <property type="entry name" value="Elongation factor Ts, mitochondrial"/>
    <property type="match status" value="1"/>
</dbReference>
<dbReference type="FunFam" id="3.30.479.20:FF:000008">
    <property type="entry name" value="Elongation factor Ts, mitochondrial"/>
    <property type="match status" value="1"/>
</dbReference>
<dbReference type="Gene3D" id="1.10.8.10">
    <property type="entry name" value="DNA helicase RuvA subunit, C-terminal domain"/>
    <property type="match status" value="1"/>
</dbReference>
<dbReference type="Gene3D" id="3.30.479.20">
    <property type="entry name" value="Elongation factor Ts, dimerisation domain"/>
    <property type="match status" value="2"/>
</dbReference>
<dbReference type="HAMAP" id="MF_00050">
    <property type="entry name" value="EF_Ts"/>
    <property type="match status" value="1"/>
</dbReference>
<dbReference type="InterPro" id="IPR036402">
    <property type="entry name" value="EF-Ts_dimer_sf"/>
</dbReference>
<dbReference type="InterPro" id="IPR001816">
    <property type="entry name" value="Transl_elong_EFTs/EF1B"/>
</dbReference>
<dbReference type="InterPro" id="IPR014039">
    <property type="entry name" value="Transl_elong_EFTs/EF1B_dimer"/>
</dbReference>
<dbReference type="InterPro" id="IPR018101">
    <property type="entry name" value="Transl_elong_Ts_CS"/>
</dbReference>
<dbReference type="InterPro" id="IPR009060">
    <property type="entry name" value="UBA-like_sf"/>
</dbReference>
<dbReference type="PANTHER" id="PTHR11741">
    <property type="entry name" value="ELONGATION FACTOR TS"/>
    <property type="match status" value="1"/>
</dbReference>
<dbReference type="PANTHER" id="PTHR11741:SF0">
    <property type="entry name" value="ELONGATION FACTOR TS, MITOCHONDRIAL"/>
    <property type="match status" value="1"/>
</dbReference>
<dbReference type="Pfam" id="PF25025">
    <property type="entry name" value="EF-Ts_N"/>
    <property type="match status" value="1"/>
</dbReference>
<dbReference type="Pfam" id="PF00889">
    <property type="entry name" value="EF_TS"/>
    <property type="match status" value="1"/>
</dbReference>
<dbReference type="SUPFAM" id="SSF54713">
    <property type="entry name" value="Elongation factor Ts (EF-Ts), dimerisation domain"/>
    <property type="match status" value="2"/>
</dbReference>
<dbReference type="SUPFAM" id="SSF46934">
    <property type="entry name" value="UBA-like"/>
    <property type="match status" value="1"/>
</dbReference>
<dbReference type="PROSITE" id="PS01126">
    <property type="entry name" value="EF_TS_1"/>
    <property type="match status" value="1"/>
</dbReference>
<dbReference type="PROSITE" id="PS01127">
    <property type="entry name" value="EF_TS_2"/>
    <property type="match status" value="1"/>
</dbReference>